<gene>
    <name type="primary">SPECC1L</name>
    <name type="synonym">CYTSA</name>
</gene>
<comment type="function">
    <text evidence="1">Involved in cytokinesis and spindle organization. May play a role in actin cytoskeleton organization and microtubule stabilization and hence required for proper cell adhesion and migration (By similarity).</text>
</comment>
<comment type="subunit">
    <text evidence="1">May interact with both microtubules and actin cytoskeleton.</text>
</comment>
<comment type="subcellular location">
    <subcellularLocation>
        <location evidence="1">Cytoplasm</location>
        <location evidence="1">Cytoskeleton</location>
    </subcellularLocation>
    <subcellularLocation>
        <location evidence="1">Cytoplasm</location>
        <location evidence="1">Cytoskeleton</location>
        <location evidence="1">Spindle</location>
    </subcellularLocation>
    <subcellularLocation>
        <location evidence="1">Cell junction</location>
        <location evidence="1">Gap junction</location>
    </subcellularLocation>
    <text evidence="1">Colocalizes with beta-tubulin, acetylated alpha-tubulin and F-actin. Also observed in a ring around gamma-tubulin containing centrioles possibly in the microtubule organizing center (By similarity).</text>
</comment>
<comment type="similarity">
    <text evidence="5">Belongs to the cytospin-A family.</text>
</comment>
<comment type="sequence caution" evidence="5">
    <conflict type="erroneous initiation">
        <sequence resource="EMBL-CDS" id="AAX84189"/>
    </conflict>
    <text>Extended N-terminus.</text>
</comment>
<reference key="1">
    <citation type="submission" date="2005-01" db="EMBL/GenBank/DDBJ databases">
        <title>Characterization of cytospin A as a multiple coiled coil protein involved in cytokinesis and spindle organization.</title>
        <authorList>
            <person name="Huang C.-H."/>
            <person name="Ye T."/>
            <person name="Chen Y."/>
        </authorList>
    </citation>
    <scope>NUCLEOTIDE SEQUENCE [MRNA]</scope>
</reference>
<evidence type="ECO:0000250" key="1"/>
<evidence type="ECO:0000255" key="2"/>
<evidence type="ECO:0000255" key="3">
    <source>
        <dbReference type="PROSITE-ProRule" id="PRU00044"/>
    </source>
</evidence>
<evidence type="ECO:0000256" key="4">
    <source>
        <dbReference type="SAM" id="MobiDB-lite"/>
    </source>
</evidence>
<evidence type="ECO:0000305" key="5"/>
<keyword id="KW-0131">Cell cycle</keyword>
<keyword id="KW-0132">Cell division</keyword>
<keyword id="KW-0965">Cell junction</keyword>
<keyword id="KW-0175">Coiled coil</keyword>
<keyword id="KW-0963">Cytoplasm</keyword>
<keyword id="KW-0206">Cytoskeleton</keyword>
<keyword id="KW-0303">Gap junction</keyword>
<keyword id="KW-1185">Reference proteome</keyword>
<accession>Q2KN97</accession>
<sequence length="1118" mass="124909">MKKASRSVGSVPKVPGVNKTQTTEKTKPESGSSLSAVTKLSKPGTSASLLKTKSNDDLLAGMASGGGVTMTNGVKAKKSTCASTVSSTTGTTMSTLENKPRTVAGSTARRSTSSGTKESSSSRERIRDRSRLSQSKKLPLAGQGSNDTVLAKRSRSRTNPESDIRMSKSKSDNQISDKAALEAKVNDLLTLAKTKDVEILHLRNELRDMRAQLGLNEDQVEGDEKSEEKEAIVVHQPTDVESTLLQLQEQNTAIREELNQLKNENRMLKDRLNALGFSLEQRLDNSEKLFGYQSLSPEITAGNHSDGGGTLTSSVEGSAPGSMEDLLSQDEHTLMDNQHSNSMDNLDSECSEVYQPLTSSDDALDAPSSSESEGVPSIERSRKGSSGNASEVSVACLTERIHQMEENQHSTAEELQATLQELADLQQITQELNSENERLGEEKVILMESLCQQSDKLEHFSRQIEYFRSLLDEHHISYVIDEDMKSGRYMELEQRYMDLAENARFEREQLLGVQQHLSNTLKMAEQDNKEAQEMIGALKERNHHMERIIESEQKSKTAIASTLEEYKATVASDQIEMNRLKAQLEHEKQKVAELYSIHNSGDKSDIQDLLESVRLDKEKAETLASSLQEELAHTRNDANRLQDAIAKVEDEYRVFQEEAKKQIEDLNVTLEKLRAELDEKETERSDMKETIFELEDEVEQHRAVKLHDNLIISDLENTVKKLQDQKHDMEREIKNLHRRLREESAEWRQFQADLQTAVVIANDIKSEAQEEIGDLKRRLHEAQEKNEKLTKELEEIKSRKQEEERGRVYNYMNAVERDLAALRQGMGLSRRSSTSSEPTPTVKTLIKSFDSASQVPSPAAATIPRTPLSPSPMKTPPAAAVSPMQRHSISGPISASKPLATLTDKRPSYAEIPVQEHLLRTSSTSRPASLPRVPAMESAKSISVSRRSSEEIKRDISAPDGASPASLMAMGTTSPQLSLSSSPTASVTPTTRSRIREERKDPLSALAREYGGSKRNALLKWCQKKTEGYQNIDITNFSSSWNDGLAFCAVLHTYLPAHIPYQELNSQDKRRNFTLAFQAAESVGIKSTLDINEMVRTERPDWQNVMLYVTAIYKYFET</sequence>
<protein>
    <recommendedName>
        <fullName>Cytospin-A</fullName>
    </recommendedName>
    <alternativeName>
        <fullName>SPECC1-like protein</fullName>
    </alternativeName>
    <alternativeName>
        <fullName>Sperm antigen with calponin homology and coiled-coil domains 1-like</fullName>
    </alternativeName>
</protein>
<organism>
    <name type="scientific">Gallus gallus</name>
    <name type="common">Chicken</name>
    <dbReference type="NCBI Taxonomy" id="9031"/>
    <lineage>
        <taxon>Eukaryota</taxon>
        <taxon>Metazoa</taxon>
        <taxon>Chordata</taxon>
        <taxon>Craniata</taxon>
        <taxon>Vertebrata</taxon>
        <taxon>Euteleostomi</taxon>
        <taxon>Archelosauria</taxon>
        <taxon>Archosauria</taxon>
        <taxon>Dinosauria</taxon>
        <taxon>Saurischia</taxon>
        <taxon>Theropoda</taxon>
        <taxon>Coelurosauria</taxon>
        <taxon>Aves</taxon>
        <taxon>Neognathae</taxon>
        <taxon>Galloanserae</taxon>
        <taxon>Galliformes</taxon>
        <taxon>Phasianidae</taxon>
        <taxon>Phasianinae</taxon>
        <taxon>Gallus</taxon>
    </lineage>
</organism>
<dbReference type="EMBL" id="AY884298">
    <property type="protein sequence ID" value="AAX84189.1"/>
    <property type="status" value="ALT_INIT"/>
    <property type="molecule type" value="mRNA"/>
</dbReference>
<dbReference type="RefSeq" id="NP_001038102.1">
    <property type="nucleotide sequence ID" value="NM_001044637.1"/>
</dbReference>
<dbReference type="RefSeq" id="XP_015130808.1">
    <property type="nucleotide sequence ID" value="XM_015275322.1"/>
</dbReference>
<dbReference type="RefSeq" id="XP_015130809.1">
    <property type="nucleotide sequence ID" value="XM_015275323.1"/>
</dbReference>
<dbReference type="RefSeq" id="XP_015130810.1">
    <property type="nucleotide sequence ID" value="XM_015275324.1"/>
</dbReference>
<dbReference type="RefSeq" id="XP_015130811.1">
    <property type="nucleotide sequence ID" value="XM_015275325.1"/>
</dbReference>
<dbReference type="RefSeq" id="XP_015130812.1">
    <property type="nucleotide sequence ID" value="XM_015275326.1"/>
</dbReference>
<dbReference type="RefSeq" id="XP_046784153.1">
    <property type="nucleotide sequence ID" value="XM_046928197.1"/>
</dbReference>
<dbReference type="RefSeq" id="XP_046784154.1">
    <property type="nucleotide sequence ID" value="XM_046928198.1"/>
</dbReference>
<dbReference type="RefSeq" id="XP_046784155.1">
    <property type="nucleotide sequence ID" value="XM_046928199.1"/>
</dbReference>
<dbReference type="RefSeq" id="XP_046784156.1">
    <property type="nucleotide sequence ID" value="XM_046928200.1"/>
</dbReference>
<dbReference type="RefSeq" id="XP_046784158.1">
    <property type="nucleotide sequence ID" value="XM_046928202.1"/>
</dbReference>
<dbReference type="SMR" id="Q2KN97"/>
<dbReference type="FunCoup" id="Q2KN97">
    <property type="interactions" value="1405"/>
</dbReference>
<dbReference type="STRING" id="9031.ENSGALP00000068262"/>
<dbReference type="GlyGen" id="Q2KN97">
    <property type="glycosylation" value="1 site"/>
</dbReference>
<dbReference type="PaxDb" id="9031-ENSGALP00000033238"/>
<dbReference type="GeneID" id="416950"/>
<dbReference type="KEGG" id="gga:416950"/>
<dbReference type="CTD" id="23384"/>
<dbReference type="VEuPathDB" id="HostDB:geneid_416950"/>
<dbReference type="eggNOG" id="KOG4678">
    <property type="taxonomic scope" value="Eukaryota"/>
</dbReference>
<dbReference type="HOGENOM" id="CLU_009328_1_0_1"/>
<dbReference type="InParanoid" id="Q2KN97"/>
<dbReference type="OrthoDB" id="21607at2759"/>
<dbReference type="PhylomeDB" id="Q2KN97"/>
<dbReference type="PRO" id="PR:Q2KN97"/>
<dbReference type="Proteomes" id="UP000000539">
    <property type="component" value="Chromosome 15"/>
</dbReference>
<dbReference type="Bgee" id="ENSGALG00000006648">
    <property type="expression patterns" value="Expressed in cerebellum and 13 other cell types or tissues"/>
</dbReference>
<dbReference type="GO" id="GO:0005737">
    <property type="term" value="C:cytoplasm"/>
    <property type="evidence" value="ECO:0007669"/>
    <property type="project" value="UniProtKB-KW"/>
</dbReference>
<dbReference type="GO" id="GO:0031941">
    <property type="term" value="C:filamentous actin"/>
    <property type="evidence" value="ECO:0000318"/>
    <property type="project" value="GO_Central"/>
</dbReference>
<dbReference type="GO" id="GO:0005921">
    <property type="term" value="C:gap junction"/>
    <property type="evidence" value="ECO:0007669"/>
    <property type="project" value="UniProtKB-SubCell"/>
</dbReference>
<dbReference type="GO" id="GO:0005815">
    <property type="term" value="C:microtubule organizing center"/>
    <property type="evidence" value="ECO:0000318"/>
    <property type="project" value="GO_Central"/>
</dbReference>
<dbReference type="GO" id="GO:0005819">
    <property type="term" value="C:spindle"/>
    <property type="evidence" value="ECO:0007669"/>
    <property type="project" value="UniProtKB-SubCell"/>
</dbReference>
<dbReference type="GO" id="GO:0030036">
    <property type="term" value="P:actin cytoskeleton organization"/>
    <property type="evidence" value="ECO:0000318"/>
    <property type="project" value="GO_Central"/>
</dbReference>
<dbReference type="GO" id="GO:0051301">
    <property type="term" value="P:cell division"/>
    <property type="evidence" value="ECO:0007669"/>
    <property type="project" value="UniProtKB-KW"/>
</dbReference>
<dbReference type="CDD" id="cd21199">
    <property type="entry name" value="CH_CYTS"/>
    <property type="match status" value="1"/>
</dbReference>
<dbReference type="FunFam" id="1.10.418.10:FF:000020">
    <property type="entry name" value="Cytospin-A isoform 1"/>
    <property type="match status" value="1"/>
</dbReference>
<dbReference type="Gene3D" id="1.10.418.10">
    <property type="entry name" value="Calponin-like domain"/>
    <property type="match status" value="1"/>
</dbReference>
<dbReference type="InterPro" id="IPR001715">
    <property type="entry name" value="CH_dom"/>
</dbReference>
<dbReference type="InterPro" id="IPR036872">
    <property type="entry name" value="CH_dom_sf"/>
</dbReference>
<dbReference type="InterPro" id="IPR050540">
    <property type="entry name" value="F-actin_Monoox_Mical"/>
</dbReference>
<dbReference type="PANTHER" id="PTHR23167">
    <property type="entry name" value="CALPONIN HOMOLOGY DOMAIN-CONTAINING PROTEIN DDB_G0272472-RELATED"/>
    <property type="match status" value="1"/>
</dbReference>
<dbReference type="PANTHER" id="PTHR23167:SF18">
    <property type="entry name" value="CYTOSPIN-A"/>
    <property type="match status" value="1"/>
</dbReference>
<dbReference type="Pfam" id="PF00307">
    <property type="entry name" value="CH"/>
    <property type="match status" value="1"/>
</dbReference>
<dbReference type="SMART" id="SM00033">
    <property type="entry name" value="CH"/>
    <property type="match status" value="1"/>
</dbReference>
<dbReference type="SUPFAM" id="SSF47576">
    <property type="entry name" value="Calponin-homology domain, CH-domain"/>
    <property type="match status" value="1"/>
</dbReference>
<dbReference type="PROSITE" id="PS50021">
    <property type="entry name" value="CH"/>
    <property type="match status" value="1"/>
</dbReference>
<proteinExistence type="evidence at transcript level"/>
<name>CYTSA_CHICK</name>
<feature type="chain" id="PRO_0000231022" description="Cytospin-A">
    <location>
        <begin position="1"/>
        <end position="1118"/>
    </location>
</feature>
<feature type="domain" description="Calponin-homology (CH)" evidence="3">
    <location>
        <begin position="1012"/>
        <end position="1117"/>
    </location>
</feature>
<feature type="region of interest" description="Disordered" evidence="4">
    <location>
        <begin position="1"/>
        <end position="176"/>
    </location>
</feature>
<feature type="region of interest" description="Disordered" evidence="4">
    <location>
        <begin position="299"/>
        <end position="324"/>
    </location>
</feature>
<feature type="region of interest" description="Disordered" evidence="4">
    <location>
        <begin position="359"/>
        <end position="391"/>
    </location>
</feature>
<feature type="region of interest" description="Disordered" evidence="4">
    <location>
        <begin position="856"/>
        <end position="879"/>
    </location>
</feature>
<feature type="region of interest" description="Disordered" evidence="4">
    <location>
        <begin position="921"/>
        <end position="1002"/>
    </location>
</feature>
<feature type="coiled-coil region" evidence="2">
    <location>
        <begin position="193"/>
        <end position="281"/>
    </location>
</feature>
<feature type="coiled-coil region" evidence="2">
    <location>
        <begin position="396"/>
        <end position="450"/>
    </location>
</feature>
<feature type="coiled-coil region" evidence="2">
    <location>
        <begin position="488"/>
        <end position="808"/>
    </location>
</feature>
<feature type="compositionally biased region" description="Polar residues" evidence="4">
    <location>
        <begin position="29"/>
        <end position="52"/>
    </location>
</feature>
<feature type="compositionally biased region" description="Low complexity" evidence="4">
    <location>
        <begin position="79"/>
        <end position="119"/>
    </location>
</feature>
<feature type="compositionally biased region" description="Basic and acidic residues" evidence="4">
    <location>
        <begin position="120"/>
        <end position="131"/>
    </location>
</feature>
<feature type="compositionally biased region" description="Basic and acidic residues" evidence="4">
    <location>
        <begin position="158"/>
        <end position="171"/>
    </location>
</feature>
<feature type="compositionally biased region" description="Low complexity" evidence="4">
    <location>
        <begin position="359"/>
        <end position="373"/>
    </location>
</feature>
<feature type="compositionally biased region" description="Low complexity" evidence="4">
    <location>
        <begin position="937"/>
        <end position="946"/>
    </location>
</feature>
<feature type="compositionally biased region" description="Basic and acidic residues" evidence="4">
    <location>
        <begin position="947"/>
        <end position="957"/>
    </location>
</feature>
<feature type="compositionally biased region" description="Low complexity" evidence="4">
    <location>
        <begin position="972"/>
        <end position="991"/>
    </location>
</feature>